<keyword id="KW-0997">Cell inner membrane</keyword>
<keyword id="KW-1003">Cell membrane</keyword>
<keyword id="KW-0472">Membrane</keyword>
<keyword id="KW-0520">NAD</keyword>
<keyword id="KW-0874">Quinone</keyword>
<keyword id="KW-1278">Translocase</keyword>
<keyword id="KW-0812">Transmembrane</keyword>
<keyword id="KW-1133">Transmembrane helix</keyword>
<keyword id="KW-0813">Transport</keyword>
<keyword id="KW-0830">Ubiquinone</keyword>
<reference key="1">
    <citation type="journal article" date="2009" name="PLoS Genet.">
        <title>Organised genome dynamics in the Escherichia coli species results in highly diverse adaptive paths.</title>
        <authorList>
            <person name="Touchon M."/>
            <person name="Hoede C."/>
            <person name="Tenaillon O."/>
            <person name="Barbe V."/>
            <person name="Baeriswyl S."/>
            <person name="Bidet P."/>
            <person name="Bingen E."/>
            <person name="Bonacorsi S."/>
            <person name="Bouchier C."/>
            <person name="Bouvet O."/>
            <person name="Calteau A."/>
            <person name="Chiapello H."/>
            <person name="Clermont O."/>
            <person name="Cruveiller S."/>
            <person name="Danchin A."/>
            <person name="Diard M."/>
            <person name="Dossat C."/>
            <person name="Karoui M.E."/>
            <person name="Frapy E."/>
            <person name="Garry L."/>
            <person name="Ghigo J.M."/>
            <person name="Gilles A.M."/>
            <person name="Johnson J."/>
            <person name="Le Bouguenec C."/>
            <person name="Lescat M."/>
            <person name="Mangenot S."/>
            <person name="Martinez-Jehanne V."/>
            <person name="Matic I."/>
            <person name="Nassif X."/>
            <person name="Oztas S."/>
            <person name="Petit M.A."/>
            <person name="Pichon C."/>
            <person name="Rouy Z."/>
            <person name="Ruf C.S."/>
            <person name="Schneider D."/>
            <person name="Tourret J."/>
            <person name="Vacherie B."/>
            <person name="Vallenet D."/>
            <person name="Medigue C."/>
            <person name="Rocha E.P.C."/>
            <person name="Denamur E."/>
        </authorList>
    </citation>
    <scope>NUCLEOTIDE SEQUENCE [LARGE SCALE GENOMIC DNA]</scope>
    <source>
        <strain>ATCC 35469 / DSM 13698 / BCRC 15582 / CCUG 18766 / IAM 14443 / JCM 21226 / LMG 7866 / NBRC 102419 / NCTC 12128 / CDC 0568-73</strain>
    </source>
</reference>
<feature type="chain" id="PRO_0000390060" description="NADH-quinone oxidoreductase subunit K">
    <location>
        <begin position="1"/>
        <end position="100"/>
    </location>
</feature>
<feature type="transmembrane region" description="Helical" evidence="1">
    <location>
        <begin position="4"/>
        <end position="24"/>
    </location>
</feature>
<feature type="transmembrane region" description="Helical" evidence="1">
    <location>
        <begin position="28"/>
        <end position="48"/>
    </location>
</feature>
<feature type="transmembrane region" description="Helical" evidence="1">
    <location>
        <begin position="60"/>
        <end position="80"/>
    </location>
</feature>
<sequence length="100" mass="10845">MIPLQHGLILAAILFVLGLTGLVIRRNLLFMLIGLEIMINASALAFVVAGSYWGQTDGQVMYILAISLAAAEASIGLALLLQLHRRRQNLNIDSVSEMRG</sequence>
<accession>B7LM53</accession>
<gene>
    <name evidence="1" type="primary">nuoK</name>
    <name type="ordered locus">EFER_0891</name>
</gene>
<evidence type="ECO:0000255" key="1">
    <source>
        <dbReference type="HAMAP-Rule" id="MF_01456"/>
    </source>
</evidence>
<dbReference type="EC" id="7.1.1.-" evidence="1"/>
<dbReference type="EMBL" id="CU928158">
    <property type="protein sequence ID" value="CAQ88426.1"/>
    <property type="molecule type" value="Genomic_DNA"/>
</dbReference>
<dbReference type="RefSeq" id="WP_000612644.1">
    <property type="nucleotide sequence ID" value="NC_011740.1"/>
</dbReference>
<dbReference type="SMR" id="B7LM53"/>
<dbReference type="GeneID" id="93033872"/>
<dbReference type="KEGG" id="efe:EFER_0891"/>
<dbReference type="HOGENOM" id="CLU_144724_0_1_6"/>
<dbReference type="OrthoDB" id="9801357at2"/>
<dbReference type="Proteomes" id="UP000000745">
    <property type="component" value="Chromosome"/>
</dbReference>
<dbReference type="GO" id="GO:0030964">
    <property type="term" value="C:NADH dehydrogenase complex"/>
    <property type="evidence" value="ECO:0007669"/>
    <property type="project" value="TreeGrafter"/>
</dbReference>
<dbReference type="GO" id="GO:0005886">
    <property type="term" value="C:plasma membrane"/>
    <property type="evidence" value="ECO:0007669"/>
    <property type="project" value="UniProtKB-SubCell"/>
</dbReference>
<dbReference type="GO" id="GO:0050136">
    <property type="term" value="F:NADH:ubiquinone reductase (non-electrogenic) activity"/>
    <property type="evidence" value="ECO:0007669"/>
    <property type="project" value="UniProtKB-UniRule"/>
</dbReference>
<dbReference type="GO" id="GO:0048038">
    <property type="term" value="F:quinone binding"/>
    <property type="evidence" value="ECO:0007669"/>
    <property type="project" value="UniProtKB-KW"/>
</dbReference>
<dbReference type="GO" id="GO:0042773">
    <property type="term" value="P:ATP synthesis coupled electron transport"/>
    <property type="evidence" value="ECO:0007669"/>
    <property type="project" value="InterPro"/>
</dbReference>
<dbReference type="FunFam" id="1.10.287.3510:FF:000001">
    <property type="entry name" value="NADH-quinone oxidoreductase subunit K"/>
    <property type="match status" value="1"/>
</dbReference>
<dbReference type="Gene3D" id="1.10.287.3510">
    <property type="match status" value="1"/>
</dbReference>
<dbReference type="HAMAP" id="MF_01456">
    <property type="entry name" value="NDH1_NuoK"/>
    <property type="match status" value="1"/>
</dbReference>
<dbReference type="InterPro" id="IPR001133">
    <property type="entry name" value="NADH_UbQ_OxRdtase_chain4L/K"/>
</dbReference>
<dbReference type="InterPro" id="IPR039428">
    <property type="entry name" value="NUOK/Mnh_C1-like"/>
</dbReference>
<dbReference type="NCBIfam" id="NF004319">
    <property type="entry name" value="PRK05715.1-1"/>
    <property type="match status" value="1"/>
</dbReference>
<dbReference type="NCBIfam" id="NF004320">
    <property type="entry name" value="PRK05715.1-2"/>
    <property type="match status" value="1"/>
</dbReference>
<dbReference type="PANTHER" id="PTHR11434:SF16">
    <property type="entry name" value="NADH-UBIQUINONE OXIDOREDUCTASE CHAIN 4L"/>
    <property type="match status" value="1"/>
</dbReference>
<dbReference type="PANTHER" id="PTHR11434">
    <property type="entry name" value="NADH-UBIQUINONE OXIDOREDUCTASE SUBUNIT ND4L"/>
    <property type="match status" value="1"/>
</dbReference>
<dbReference type="Pfam" id="PF00420">
    <property type="entry name" value="Oxidored_q2"/>
    <property type="match status" value="1"/>
</dbReference>
<name>NUOK_ESCF3</name>
<comment type="function">
    <text evidence="1">NDH-1 shuttles electrons from NADH, via FMN and iron-sulfur (Fe-S) centers, to quinones in the respiratory chain. The immediate electron acceptor for the enzyme in this species is believed to be ubiquinone. Couples the redox reaction to proton translocation (for every two electrons transferred, four hydrogen ions are translocated across the cytoplasmic membrane), and thus conserves the redox energy in a proton gradient.</text>
</comment>
<comment type="catalytic activity">
    <reaction evidence="1">
        <text>a quinone + NADH + 5 H(+)(in) = a quinol + NAD(+) + 4 H(+)(out)</text>
        <dbReference type="Rhea" id="RHEA:57888"/>
        <dbReference type="ChEBI" id="CHEBI:15378"/>
        <dbReference type="ChEBI" id="CHEBI:24646"/>
        <dbReference type="ChEBI" id="CHEBI:57540"/>
        <dbReference type="ChEBI" id="CHEBI:57945"/>
        <dbReference type="ChEBI" id="CHEBI:132124"/>
    </reaction>
</comment>
<comment type="subunit">
    <text evidence="1">NDH-1 is composed of 13 different subunits. Subunits NuoA, H, J, K, L, M, N constitute the membrane sector of the complex.</text>
</comment>
<comment type="subcellular location">
    <subcellularLocation>
        <location evidence="1">Cell inner membrane</location>
        <topology evidence="1">Multi-pass membrane protein</topology>
    </subcellularLocation>
</comment>
<comment type="similarity">
    <text evidence="1">Belongs to the complex I subunit 4L family.</text>
</comment>
<protein>
    <recommendedName>
        <fullName evidence="1">NADH-quinone oxidoreductase subunit K</fullName>
        <ecNumber evidence="1">7.1.1.-</ecNumber>
    </recommendedName>
    <alternativeName>
        <fullName evidence="1">NADH dehydrogenase I subunit K</fullName>
    </alternativeName>
    <alternativeName>
        <fullName evidence="1">NDH-1 subunit K</fullName>
    </alternativeName>
</protein>
<proteinExistence type="inferred from homology"/>
<organism>
    <name type="scientific">Escherichia fergusonii (strain ATCC 35469 / DSM 13698 / CCUG 18766 / IAM 14443 / JCM 21226 / LMG 7866 / NBRC 102419 / NCTC 12128 / CDC 0568-73)</name>
    <dbReference type="NCBI Taxonomy" id="585054"/>
    <lineage>
        <taxon>Bacteria</taxon>
        <taxon>Pseudomonadati</taxon>
        <taxon>Pseudomonadota</taxon>
        <taxon>Gammaproteobacteria</taxon>
        <taxon>Enterobacterales</taxon>
        <taxon>Enterobacteriaceae</taxon>
        <taxon>Escherichia</taxon>
    </lineage>
</organism>